<name>ASSY_DEHM1</name>
<evidence type="ECO:0000255" key="1">
    <source>
        <dbReference type="HAMAP-Rule" id="MF_00005"/>
    </source>
</evidence>
<accession>Q3Z727</accession>
<protein>
    <recommendedName>
        <fullName evidence="1">Argininosuccinate synthase</fullName>
        <ecNumber evidence="1">6.3.4.5</ecNumber>
    </recommendedName>
    <alternativeName>
        <fullName evidence="1">Citrulline--aspartate ligase</fullName>
    </alternativeName>
</protein>
<dbReference type="EC" id="6.3.4.5" evidence="1"/>
<dbReference type="EMBL" id="CP000027">
    <property type="protein sequence ID" value="AAW39470.1"/>
    <property type="molecule type" value="Genomic_DNA"/>
</dbReference>
<dbReference type="RefSeq" id="WP_010936949.1">
    <property type="nucleotide sequence ID" value="NC_002936.3"/>
</dbReference>
<dbReference type="SMR" id="Q3Z727"/>
<dbReference type="FunCoup" id="Q3Z727">
    <property type="interactions" value="285"/>
</dbReference>
<dbReference type="STRING" id="243164.DET1260"/>
<dbReference type="GeneID" id="3229430"/>
<dbReference type="KEGG" id="det:DET1260"/>
<dbReference type="PATRIC" id="fig|243164.10.peg.1189"/>
<dbReference type="eggNOG" id="COG0137">
    <property type="taxonomic scope" value="Bacteria"/>
</dbReference>
<dbReference type="HOGENOM" id="CLU_032784_4_2_0"/>
<dbReference type="InParanoid" id="Q3Z727"/>
<dbReference type="UniPathway" id="UPA00068">
    <property type="reaction ID" value="UER00113"/>
</dbReference>
<dbReference type="Proteomes" id="UP000008289">
    <property type="component" value="Chromosome"/>
</dbReference>
<dbReference type="GO" id="GO:0005737">
    <property type="term" value="C:cytoplasm"/>
    <property type="evidence" value="ECO:0007669"/>
    <property type="project" value="UniProtKB-SubCell"/>
</dbReference>
<dbReference type="GO" id="GO:0004055">
    <property type="term" value="F:argininosuccinate synthase activity"/>
    <property type="evidence" value="ECO:0007669"/>
    <property type="project" value="UniProtKB-UniRule"/>
</dbReference>
<dbReference type="GO" id="GO:0005524">
    <property type="term" value="F:ATP binding"/>
    <property type="evidence" value="ECO:0007669"/>
    <property type="project" value="UniProtKB-UniRule"/>
</dbReference>
<dbReference type="GO" id="GO:0000053">
    <property type="term" value="P:argininosuccinate metabolic process"/>
    <property type="evidence" value="ECO:0007669"/>
    <property type="project" value="TreeGrafter"/>
</dbReference>
<dbReference type="GO" id="GO:0006526">
    <property type="term" value="P:L-arginine biosynthetic process"/>
    <property type="evidence" value="ECO:0007669"/>
    <property type="project" value="UniProtKB-UniRule"/>
</dbReference>
<dbReference type="GO" id="GO:0000050">
    <property type="term" value="P:urea cycle"/>
    <property type="evidence" value="ECO:0007669"/>
    <property type="project" value="TreeGrafter"/>
</dbReference>
<dbReference type="CDD" id="cd01999">
    <property type="entry name" value="ASS"/>
    <property type="match status" value="1"/>
</dbReference>
<dbReference type="FunFam" id="3.40.50.620:FF:000019">
    <property type="entry name" value="Argininosuccinate synthase"/>
    <property type="match status" value="1"/>
</dbReference>
<dbReference type="FunFam" id="3.90.1260.10:FF:000007">
    <property type="entry name" value="Argininosuccinate synthase"/>
    <property type="match status" value="1"/>
</dbReference>
<dbReference type="Gene3D" id="3.90.1260.10">
    <property type="entry name" value="Argininosuccinate synthetase, chain A, domain 2"/>
    <property type="match status" value="1"/>
</dbReference>
<dbReference type="Gene3D" id="3.40.50.620">
    <property type="entry name" value="HUPs"/>
    <property type="match status" value="1"/>
</dbReference>
<dbReference type="Gene3D" id="1.20.5.470">
    <property type="entry name" value="Single helix bin"/>
    <property type="match status" value="1"/>
</dbReference>
<dbReference type="HAMAP" id="MF_00005">
    <property type="entry name" value="Arg_succ_synth_type1"/>
    <property type="match status" value="1"/>
</dbReference>
<dbReference type="InterPro" id="IPR048268">
    <property type="entry name" value="Arginosuc_syn_C"/>
</dbReference>
<dbReference type="InterPro" id="IPR048267">
    <property type="entry name" value="Arginosuc_syn_N"/>
</dbReference>
<dbReference type="InterPro" id="IPR001518">
    <property type="entry name" value="Arginosuc_synth"/>
</dbReference>
<dbReference type="InterPro" id="IPR018223">
    <property type="entry name" value="Arginosuc_synth_CS"/>
</dbReference>
<dbReference type="InterPro" id="IPR023434">
    <property type="entry name" value="Arginosuc_synth_type_1_subfam"/>
</dbReference>
<dbReference type="InterPro" id="IPR024074">
    <property type="entry name" value="AS_cat/multimer_dom_body"/>
</dbReference>
<dbReference type="InterPro" id="IPR014729">
    <property type="entry name" value="Rossmann-like_a/b/a_fold"/>
</dbReference>
<dbReference type="NCBIfam" id="TIGR00032">
    <property type="entry name" value="argG"/>
    <property type="match status" value="1"/>
</dbReference>
<dbReference type="NCBIfam" id="NF001770">
    <property type="entry name" value="PRK00509.1"/>
    <property type="match status" value="1"/>
</dbReference>
<dbReference type="PANTHER" id="PTHR11587">
    <property type="entry name" value="ARGININOSUCCINATE SYNTHASE"/>
    <property type="match status" value="1"/>
</dbReference>
<dbReference type="PANTHER" id="PTHR11587:SF2">
    <property type="entry name" value="ARGININOSUCCINATE SYNTHASE"/>
    <property type="match status" value="1"/>
</dbReference>
<dbReference type="Pfam" id="PF20979">
    <property type="entry name" value="Arginosuc_syn_C"/>
    <property type="match status" value="1"/>
</dbReference>
<dbReference type="Pfam" id="PF00764">
    <property type="entry name" value="Arginosuc_synth"/>
    <property type="match status" value="1"/>
</dbReference>
<dbReference type="SUPFAM" id="SSF52402">
    <property type="entry name" value="Adenine nucleotide alpha hydrolases-like"/>
    <property type="match status" value="1"/>
</dbReference>
<dbReference type="SUPFAM" id="SSF69864">
    <property type="entry name" value="Argininosuccinate synthetase, C-terminal domain"/>
    <property type="match status" value="1"/>
</dbReference>
<dbReference type="PROSITE" id="PS00564">
    <property type="entry name" value="ARGININOSUCCIN_SYN_1"/>
    <property type="match status" value="1"/>
</dbReference>
<dbReference type="PROSITE" id="PS00565">
    <property type="entry name" value="ARGININOSUCCIN_SYN_2"/>
    <property type="match status" value="1"/>
</dbReference>
<gene>
    <name evidence="1" type="primary">argG</name>
    <name type="ordered locus">DET1260</name>
</gene>
<feature type="chain" id="PRO_0000263918" description="Argininosuccinate synthase">
    <location>
        <begin position="1"/>
        <end position="406"/>
    </location>
</feature>
<feature type="binding site" evidence="1">
    <location>
        <begin position="8"/>
        <end position="16"/>
    </location>
    <ligand>
        <name>ATP</name>
        <dbReference type="ChEBI" id="CHEBI:30616"/>
    </ligand>
</feature>
<feature type="binding site" evidence="1">
    <location>
        <position position="86"/>
    </location>
    <ligand>
        <name>L-citrulline</name>
        <dbReference type="ChEBI" id="CHEBI:57743"/>
    </ligand>
</feature>
<feature type="binding site" evidence="1">
    <location>
        <position position="116"/>
    </location>
    <ligand>
        <name>ATP</name>
        <dbReference type="ChEBI" id="CHEBI:30616"/>
    </ligand>
</feature>
<feature type="binding site" evidence="1">
    <location>
        <position position="118"/>
    </location>
    <ligand>
        <name>L-aspartate</name>
        <dbReference type="ChEBI" id="CHEBI:29991"/>
    </ligand>
</feature>
<feature type="binding site" evidence="1">
    <location>
        <position position="122"/>
    </location>
    <ligand>
        <name>L-aspartate</name>
        <dbReference type="ChEBI" id="CHEBI:29991"/>
    </ligand>
</feature>
<feature type="binding site" evidence="1">
    <location>
        <position position="122"/>
    </location>
    <ligand>
        <name>L-citrulline</name>
        <dbReference type="ChEBI" id="CHEBI:57743"/>
    </ligand>
</feature>
<feature type="binding site" evidence="1">
    <location>
        <position position="123"/>
    </location>
    <ligand>
        <name>L-aspartate</name>
        <dbReference type="ChEBI" id="CHEBI:29991"/>
    </ligand>
</feature>
<feature type="binding site" evidence="1">
    <location>
        <position position="126"/>
    </location>
    <ligand>
        <name>L-citrulline</name>
        <dbReference type="ChEBI" id="CHEBI:57743"/>
    </ligand>
</feature>
<feature type="binding site" evidence="1">
    <location>
        <position position="174"/>
    </location>
    <ligand>
        <name>L-citrulline</name>
        <dbReference type="ChEBI" id="CHEBI:57743"/>
    </ligand>
</feature>
<feature type="binding site" evidence="1">
    <location>
        <position position="183"/>
    </location>
    <ligand>
        <name>L-citrulline</name>
        <dbReference type="ChEBI" id="CHEBI:57743"/>
    </ligand>
</feature>
<feature type="binding site" evidence="1">
    <location>
        <position position="259"/>
    </location>
    <ligand>
        <name>L-citrulline</name>
        <dbReference type="ChEBI" id="CHEBI:57743"/>
    </ligand>
</feature>
<feature type="binding site" evidence="1">
    <location>
        <position position="271"/>
    </location>
    <ligand>
        <name>L-citrulline</name>
        <dbReference type="ChEBI" id="CHEBI:57743"/>
    </ligand>
</feature>
<sequence length="406" mass="45044">MSEKVVLAYSGGLDTSAAVKWLQEKYGMDVIAVTIDVGNEKDFTLIKEKALKVGAKKAYVRDVRKEFAEDYIWKAIKANSMYEGVYPLATALARPLIAKVMVDIAMEEGATAIAHGCTGKGNDQVRFDVGINTLAPHLKIIAPARQWGMTREQTMEYAQKWGIPVPISVKNPFSIDENLWGRSIECGLLEDPWNEPIPEVFAWTRPVEATPDAPEYLEVEFEQGVPVAVNGEKLSPLALIQKVHDIAGLHGVGRIDHVENRLVGIKSREIYEAPAAVVLIAAHQALEAMTLSKSQLRFKQMVEATYSDIIYNGLWFSALRQDLDAFIESSQRFVSGTVRLKLSKGSFRVVGRKSPYSLYHKGMATYDKGDQFDPSSAVGFITLWGLQAKLQAQLQPILEEEKGNKS</sequence>
<proteinExistence type="inferred from homology"/>
<keyword id="KW-0028">Amino-acid biosynthesis</keyword>
<keyword id="KW-0055">Arginine biosynthesis</keyword>
<keyword id="KW-0067">ATP-binding</keyword>
<keyword id="KW-0963">Cytoplasm</keyword>
<keyword id="KW-0436">Ligase</keyword>
<keyword id="KW-0547">Nucleotide-binding</keyword>
<reference key="1">
    <citation type="journal article" date="2005" name="Science">
        <title>Genome sequence of the PCE-dechlorinating bacterium Dehalococcoides ethenogenes.</title>
        <authorList>
            <person name="Seshadri R."/>
            <person name="Adrian L."/>
            <person name="Fouts D.E."/>
            <person name="Eisen J.A."/>
            <person name="Phillippy A.M."/>
            <person name="Methe B.A."/>
            <person name="Ward N.L."/>
            <person name="Nelson W.C."/>
            <person name="DeBoy R.T."/>
            <person name="Khouri H.M."/>
            <person name="Kolonay J.F."/>
            <person name="Dodson R.J."/>
            <person name="Daugherty S.C."/>
            <person name="Brinkac L.M."/>
            <person name="Sullivan S.A."/>
            <person name="Madupu R."/>
            <person name="Nelson K.E."/>
            <person name="Kang K.H."/>
            <person name="Impraim M."/>
            <person name="Tran K."/>
            <person name="Robinson J.M."/>
            <person name="Forberger H.A."/>
            <person name="Fraser C.M."/>
            <person name="Zinder S.H."/>
            <person name="Heidelberg J.F."/>
        </authorList>
    </citation>
    <scope>NUCLEOTIDE SEQUENCE [LARGE SCALE GENOMIC DNA]</scope>
    <source>
        <strain>ATCC BAA-2266 / KCTC 15142 / 195</strain>
    </source>
</reference>
<organism>
    <name type="scientific">Dehalococcoides mccartyi (strain ATCC BAA-2266 / KCTC 15142 / 195)</name>
    <name type="common">Dehalococcoides ethenogenes (strain 195)</name>
    <dbReference type="NCBI Taxonomy" id="243164"/>
    <lineage>
        <taxon>Bacteria</taxon>
        <taxon>Bacillati</taxon>
        <taxon>Chloroflexota</taxon>
        <taxon>Dehalococcoidia</taxon>
        <taxon>Dehalococcoidales</taxon>
        <taxon>Dehalococcoidaceae</taxon>
        <taxon>Dehalococcoides</taxon>
    </lineage>
</organism>
<comment type="catalytic activity">
    <reaction evidence="1">
        <text>L-citrulline + L-aspartate + ATP = 2-(N(omega)-L-arginino)succinate + AMP + diphosphate + H(+)</text>
        <dbReference type="Rhea" id="RHEA:10932"/>
        <dbReference type="ChEBI" id="CHEBI:15378"/>
        <dbReference type="ChEBI" id="CHEBI:29991"/>
        <dbReference type="ChEBI" id="CHEBI:30616"/>
        <dbReference type="ChEBI" id="CHEBI:33019"/>
        <dbReference type="ChEBI" id="CHEBI:57472"/>
        <dbReference type="ChEBI" id="CHEBI:57743"/>
        <dbReference type="ChEBI" id="CHEBI:456215"/>
        <dbReference type="EC" id="6.3.4.5"/>
    </reaction>
</comment>
<comment type="pathway">
    <text evidence="1">Amino-acid biosynthesis; L-arginine biosynthesis; L-arginine from L-ornithine and carbamoyl phosphate: step 2/3.</text>
</comment>
<comment type="subunit">
    <text evidence="1">Homotetramer.</text>
</comment>
<comment type="subcellular location">
    <subcellularLocation>
        <location evidence="1">Cytoplasm</location>
    </subcellularLocation>
</comment>
<comment type="similarity">
    <text evidence="1">Belongs to the argininosuccinate synthase family. Type 1 subfamily.</text>
</comment>